<comment type="function">
    <text evidence="1">Catalyzes the transamination of N(2)-succinylornithine and alpha-ketoglutarate into N(2)-succinylglutamate semialdehyde and glutamate. Can also act as an acetylornithine aminotransferase.</text>
</comment>
<comment type="catalytic activity">
    <reaction evidence="1">
        <text>N(2)-succinyl-L-ornithine + 2-oxoglutarate = N-succinyl-L-glutamate 5-semialdehyde + L-glutamate</text>
        <dbReference type="Rhea" id="RHEA:16953"/>
        <dbReference type="ChEBI" id="CHEBI:16810"/>
        <dbReference type="ChEBI" id="CHEBI:29985"/>
        <dbReference type="ChEBI" id="CHEBI:58514"/>
        <dbReference type="ChEBI" id="CHEBI:58520"/>
        <dbReference type="EC" id="2.6.1.81"/>
    </reaction>
</comment>
<comment type="cofactor">
    <cofactor evidence="1">
        <name>pyridoxal 5'-phosphate</name>
        <dbReference type="ChEBI" id="CHEBI:597326"/>
    </cofactor>
</comment>
<comment type="pathway">
    <text evidence="1">Amino-acid degradation; L-arginine degradation via AST pathway; L-glutamate and succinate from L-arginine: step 3/5.</text>
</comment>
<comment type="similarity">
    <text evidence="1">Belongs to the class-III pyridoxal-phosphate-dependent aminotransferase family. AstC subfamily.</text>
</comment>
<proteinExistence type="inferred from homology"/>
<reference key="1">
    <citation type="submission" date="2008-05" db="EMBL/GenBank/DDBJ databases">
        <title>Complete sequence of Shigella boydii serotype 18 strain BS512.</title>
        <authorList>
            <person name="Rasko D.A."/>
            <person name="Rosovitz M."/>
            <person name="Maurelli A.T."/>
            <person name="Myers G."/>
            <person name="Seshadri R."/>
            <person name="Cer R."/>
            <person name="Jiang L."/>
            <person name="Ravel J."/>
            <person name="Sebastian Y."/>
        </authorList>
    </citation>
    <scope>NUCLEOTIDE SEQUENCE [LARGE SCALE GENOMIC DNA]</scope>
    <source>
        <strain>CDC 3083-94 / BS512</strain>
    </source>
</reference>
<keyword id="KW-0032">Aminotransferase</keyword>
<keyword id="KW-0056">Arginine metabolism</keyword>
<keyword id="KW-0663">Pyridoxal phosphate</keyword>
<keyword id="KW-1185">Reference proteome</keyword>
<keyword id="KW-0808">Transferase</keyword>
<evidence type="ECO:0000255" key="1">
    <source>
        <dbReference type="HAMAP-Rule" id="MF_01173"/>
    </source>
</evidence>
<feature type="chain" id="PRO_1000164398" description="Succinylornithine transaminase">
    <location>
        <begin position="1"/>
        <end position="406"/>
    </location>
</feature>
<feature type="modified residue" description="N6-(pyridoxal phosphate)lysine" evidence="1">
    <location>
        <position position="252"/>
    </location>
</feature>
<gene>
    <name evidence="1" type="primary">astC</name>
    <name evidence="1" type="synonym">argM</name>
    <name type="ordered locus">SbBS512_E1995</name>
</gene>
<sequence length="406" mass="43727">MSQPITRENFDEWMIPVYAPAPFIPVRGEGSRLWDQQGKEYIDFAGGIAVNALGHAHPELREALNEQASKFWHTGNGYTNEPVLRLAKKLIDATFADRVFFCNSGAEANEAALKLARKFAHDRYGSHKSGIMAFKNAFHGRTLFTVSAGGQPAYSQDFAPLPPDIRHAAYNDINSASALIDDATCAVIVEPIQGEGGVVPASNAFLQGLRELCDRHNALLIFDEVQTGVGRTGELYAYMHYGVTPDLLTTAKALGGDFPVGALLTTEECASVMTVGTHGTTYGGNPLASAVAGKVLELINTPEMLNGVKQRHDWFVERLNTINHRYGLFSEVRGLGLLIGCVLNADYAGQAKQISQEAAKAGVMVLIAGGNVVRFAPALNVSEEEVTTGLDRFAAACEHFVSRGSS</sequence>
<name>ASTC_SHIB3</name>
<organism>
    <name type="scientific">Shigella boydii serotype 18 (strain CDC 3083-94 / BS512)</name>
    <dbReference type="NCBI Taxonomy" id="344609"/>
    <lineage>
        <taxon>Bacteria</taxon>
        <taxon>Pseudomonadati</taxon>
        <taxon>Pseudomonadota</taxon>
        <taxon>Gammaproteobacteria</taxon>
        <taxon>Enterobacterales</taxon>
        <taxon>Enterobacteriaceae</taxon>
        <taxon>Shigella</taxon>
    </lineage>
</organism>
<accession>B2U3D0</accession>
<protein>
    <recommendedName>
        <fullName evidence="1">Succinylornithine transaminase</fullName>
        <ecNumber evidence="1">2.6.1.81</ecNumber>
    </recommendedName>
    <alternativeName>
        <fullName evidence="1">Succinylornithine aminotransferase</fullName>
    </alternativeName>
</protein>
<dbReference type="EC" id="2.6.1.81" evidence="1"/>
<dbReference type="EMBL" id="CP001063">
    <property type="protein sequence ID" value="ACD10092.1"/>
    <property type="molecule type" value="Genomic_DNA"/>
</dbReference>
<dbReference type="RefSeq" id="WP_000081975.1">
    <property type="nucleotide sequence ID" value="NC_010658.1"/>
</dbReference>
<dbReference type="SMR" id="B2U3D0"/>
<dbReference type="STRING" id="344609.SbBS512_E1995"/>
<dbReference type="KEGG" id="sbc:SbBS512_E1995"/>
<dbReference type="HOGENOM" id="CLU_016922_10_1_6"/>
<dbReference type="UniPathway" id="UPA00185">
    <property type="reaction ID" value="UER00281"/>
</dbReference>
<dbReference type="Proteomes" id="UP000001030">
    <property type="component" value="Chromosome"/>
</dbReference>
<dbReference type="GO" id="GO:0042802">
    <property type="term" value="F:identical protein binding"/>
    <property type="evidence" value="ECO:0007669"/>
    <property type="project" value="TreeGrafter"/>
</dbReference>
<dbReference type="GO" id="GO:0030170">
    <property type="term" value="F:pyridoxal phosphate binding"/>
    <property type="evidence" value="ECO:0007669"/>
    <property type="project" value="UniProtKB-UniRule"/>
</dbReference>
<dbReference type="GO" id="GO:0043825">
    <property type="term" value="F:succinylornithine transaminase activity"/>
    <property type="evidence" value="ECO:0007669"/>
    <property type="project" value="UniProtKB-EC"/>
</dbReference>
<dbReference type="GO" id="GO:1901607">
    <property type="term" value="P:alpha-amino acid biosynthetic process"/>
    <property type="evidence" value="ECO:0007669"/>
    <property type="project" value="UniProtKB-ARBA"/>
</dbReference>
<dbReference type="GO" id="GO:0019544">
    <property type="term" value="P:arginine catabolic process to glutamate"/>
    <property type="evidence" value="ECO:0007669"/>
    <property type="project" value="UniProtKB-UniRule"/>
</dbReference>
<dbReference type="GO" id="GO:0019545">
    <property type="term" value="P:arginine catabolic process to succinate"/>
    <property type="evidence" value="ECO:0007669"/>
    <property type="project" value="UniProtKB-UniRule"/>
</dbReference>
<dbReference type="GO" id="GO:0006593">
    <property type="term" value="P:ornithine catabolic process"/>
    <property type="evidence" value="ECO:0007669"/>
    <property type="project" value="InterPro"/>
</dbReference>
<dbReference type="CDD" id="cd00610">
    <property type="entry name" value="OAT_like"/>
    <property type="match status" value="1"/>
</dbReference>
<dbReference type="FunFam" id="3.40.640.10:FF:000004">
    <property type="entry name" value="Acetylornithine aminotransferase"/>
    <property type="match status" value="1"/>
</dbReference>
<dbReference type="FunFam" id="3.90.1150.10:FF:000009">
    <property type="entry name" value="Succinylornithine transaminase"/>
    <property type="match status" value="1"/>
</dbReference>
<dbReference type="Gene3D" id="3.90.1150.10">
    <property type="entry name" value="Aspartate Aminotransferase, domain 1"/>
    <property type="match status" value="1"/>
</dbReference>
<dbReference type="Gene3D" id="3.40.640.10">
    <property type="entry name" value="Type I PLP-dependent aspartate aminotransferase-like (Major domain)"/>
    <property type="match status" value="1"/>
</dbReference>
<dbReference type="HAMAP" id="MF_01107">
    <property type="entry name" value="ArgD_aminotrans_3"/>
    <property type="match status" value="1"/>
</dbReference>
<dbReference type="HAMAP" id="MF_01173">
    <property type="entry name" value="AstC_aminotrans_3"/>
    <property type="match status" value="1"/>
</dbReference>
<dbReference type="InterPro" id="IPR017652">
    <property type="entry name" value="Ac/SucOrn_transaminase_bac"/>
</dbReference>
<dbReference type="InterPro" id="IPR004636">
    <property type="entry name" value="AcOrn/SuccOrn_fam"/>
</dbReference>
<dbReference type="InterPro" id="IPR005814">
    <property type="entry name" value="Aminotrans_3"/>
</dbReference>
<dbReference type="InterPro" id="IPR049704">
    <property type="entry name" value="Aminotrans_3_PPA_site"/>
</dbReference>
<dbReference type="InterPro" id="IPR050103">
    <property type="entry name" value="Class-III_PLP-dep_AT"/>
</dbReference>
<dbReference type="InterPro" id="IPR015424">
    <property type="entry name" value="PyrdxlP-dep_Trfase"/>
</dbReference>
<dbReference type="InterPro" id="IPR015421">
    <property type="entry name" value="PyrdxlP-dep_Trfase_major"/>
</dbReference>
<dbReference type="InterPro" id="IPR015422">
    <property type="entry name" value="PyrdxlP-dep_Trfase_small"/>
</dbReference>
<dbReference type="InterPro" id="IPR026330">
    <property type="entry name" value="SOAT"/>
</dbReference>
<dbReference type="NCBIfam" id="TIGR03246">
    <property type="entry name" value="arg_catab_astC"/>
    <property type="match status" value="1"/>
</dbReference>
<dbReference type="NCBIfam" id="TIGR00707">
    <property type="entry name" value="argD"/>
    <property type="match status" value="1"/>
</dbReference>
<dbReference type="NCBIfam" id="NF002325">
    <property type="entry name" value="PRK01278.1"/>
    <property type="match status" value="1"/>
</dbReference>
<dbReference type="NCBIfam" id="NF003468">
    <property type="entry name" value="PRK05093.1"/>
    <property type="match status" value="1"/>
</dbReference>
<dbReference type="NCBIfam" id="NF009047">
    <property type="entry name" value="PRK12381.1"/>
    <property type="match status" value="1"/>
</dbReference>
<dbReference type="PANTHER" id="PTHR11986">
    <property type="entry name" value="AMINOTRANSFERASE CLASS III"/>
    <property type="match status" value="1"/>
</dbReference>
<dbReference type="PANTHER" id="PTHR11986:SF113">
    <property type="entry name" value="SUCCINYLORNITHINE TRANSAMINASE"/>
    <property type="match status" value="1"/>
</dbReference>
<dbReference type="Pfam" id="PF00202">
    <property type="entry name" value="Aminotran_3"/>
    <property type="match status" value="1"/>
</dbReference>
<dbReference type="PIRSF" id="PIRSF000521">
    <property type="entry name" value="Transaminase_4ab_Lys_Orn"/>
    <property type="match status" value="1"/>
</dbReference>
<dbReference type="SUPFAM" id="SSF53383">
    <property type="entry name" value="PLP-dependent transferases"/>
    <property type="match status" value="1"/>
</dbReference>
<dbReference type="PROSITE" id="PS00600">
    <property type="entry name" value="AA_TRANSFER_CLASS_3"/>
    <property type="match status" value="1"/>
</dbReference>